<accession>Q5SF96</accession>
<accession>Q5PA90</accession>
<comment type="function">
    <text evidence="2">Associates with actin filament appendages that are formed in the inclusion appendages of the parasitophorous vacuole during infection of the host erythrocyte.</text>
</comment>
<comment type="subcellular location">
    <subcellularLocation>
        <location evidence="2">Secreted</location>
    </subcellularLocation>
</comment>
<feature type="signal peptide" evidence="1">
    <location>
        <begin position="1"/>
        <end position="39"/>
    </location>
</feature>
<feature type="chain" id="PRO_0000258017" description="Appendage-associated protein" evidence="1">
    <location>
        <begin position="40"/>
        <end position="419"/>
    </location>
</feature>
<feature type="coiled-coil region" evidence="1">
    <location>
        <begin position="232"/>
        <end position="262"/>
    </location>
</feature>
<evidence type="ECO:0000255" key="1"/>
<evidence type="ECO:0000269" key="2">
    <source>
    </source>
</evidence>
<evidence type="ECO:0000312" key="3">
    <source>
        <dbReference type="EMBL" id="AAS83464.1"/>
    </source>
</evidence>
<evidence type="ECO:0000312" key="4">
    <source>
        <dbReference type="EMBL" id="AAV86790.1"/>
    </source>
</evidence>
<reference evidence="3" key="1">
    <citation type="journal article" date="2004" name="Infect. Immun.">
        <title>Identification of a novel Anaplasma marginale appendage-associated protein that localizes with actin filaments during intraerythrocytic infection.</title>
        <authorList>
            <person name="Stich R.W."/>
            <person name="Olah G.A."/>
            <person name="Brayton K.A."/>
            <person name="Brown W.C."/>
            <person name="Fecheimer M."/>
            <person name="Green-Church K."/>
            <person name="Jittapalapong S."/>
            <person name="Kocan K.M."/>
            <person name="McGuire T.C."/>
            <person name="Rurangirwa F.R."/>
            <person name="Palmer G.H."/>
        </authorList>
    </citation>
    <scope>NUCLEOTIDE SEQUENCE [GENOMIC DNA]</scope>
    <scope>PROTEIN SEQUENCE OF 187-226</scope>
    <scope>FUNCTION</scope>
    <scope>SUBCELLULAR LOCATION</scope>
</reference>
<reference evidence="4" key="2">
    <citation type="journal article" date="2005" name="Proc. Natl. Acad. Sci. U.S.A.">
        <title>Complete genome sequencing of Anaplasma marginale reveals that the surface is skewed to two superfamilies of outer membrane proteins.</title>
        <authorList>
            <person name="Brayton K.A."/>
            <person name="Kappmeyer L.S."/>
            <person name="Herndon D.R."/>
            <person name="Dark M.J."/>
            <person name="Tibbals D.L."/>
            <person name="Palmer G.H."/>
            <person name="McGuire T.C."/>
            <person name="Knowles D.P. Jr."/>
        </authorList>
    </citation>
    <scope>NUCLEOTIDE SEQUENCE [LARGE SCALE GENOMIC DNA]</scope>
    <source>
        <strain>St. Maries</strain>
    </source>
</reference>
<name>AAAP_ANAMM</name>
<gene>
    <name evidence="3" type="primary">aaaP</name>
    <name type="ordered locus">AM878</name>
</gene>
<dbReference type="EMBL" id="AY514450">
    <property type="protein sequence ID" value="AAS83464.1"/>
    <property type="molecule type" value="Genomic_DNA"/>
</dbReference>
<dbReference type="EMBL" id="CP000030">
    <property type="protein sequence ID" value="AAV86790.1"/>
    <property type="molecule type" value="Genomic_DNA"/>
</dbReference>
<dbReference type="KEGG" id="ama:AM878"/>
<dbReference type="HOGENOM" id="CLU_641979_0_0_5"/>
<dbReference type="GO" id="GO:0020003">
    <property type="term" value="C:symbiont-containing vacuole"/>
    <property type="evidence" value="ECO:0000314"/>
    <property type="project" value="UniProtKB"/>
</dbReference>
<dbReference type="GO" id="GO:0051015">
    <property type="term" value="F:actin filament binding"/>
    <property type="evidence" value="ECO:0000314"/>
    <property type="project" value="UniProtKB"/>
</dbReference>
<dbReference type="GO" id="GO:0051701">
    <property type="term" value="P:biological process involved in interaction with host"/>
    <property type="evidence" value="ECO:0000314"/>
    <property type="project" value="UniProtKB"/>
</dbReference>
<proteinExistence type="evidence at protein level"/>
<keyword id="KW-0175">Coiled coil</keyword>
<keyword id="KW-0903">Direct protein sequencing</keyword>
<keyword id="KW-0964">Secreted</keyword>
<keyword id="KW-0732">Signal</keyword>
<sequence length="419" mass="46142">MIVTYGTVGCPVSRGGSPGCGRRIAEELRLAEDARLRLALLGRCIVKGSPAQARGELRAELKAIDATIELRKELDAIDAEWAPKIELSAELRAIDAEWRPAIRLRSAYRAIIGRIELRKELDAIDAEWAPKIELSAELKAIDAEWRPAIRLRSAYRAIIGRWELSKELKAIDAEWRPAIARESLRKELDAIDAEWQHAITFWHISRAIIGSIELSKELKAIDAKWKYVAIYERQKAQRRREERAAKAREELRKELNDIDAKWKSASAIKLRKDLRSTSEGVDHTEFALELRATDKSGNMELVLKLKATDTKNQHDAIVKAIEDGFVGYAAECGAATRELNACGGMSTTSAPSTDLISTVVSAVTTGTGQQQSAGSESQRPTECGGGGTLLSSLFALILPSSNWYCNAVLYGGFLGCLGS</sequence>
<protein>
    <recommendedName>
        <fullName>Appendage-associated protein</fullName>
    </recommendedName>
</protein>
<organism>
    <name type="scientific">Anaplasma marginale (strain St. Maries)</name>
    <dbReference type="NCBI Taxonomy" id="234826"/>
    <lineage>
        <taxon>Bacteria</taxon>
        <taxon>Pseudomonadati</taxon>
        <taxon>Pseudomonadota</taxon>
        <taxon>Alphaproteobacteria</taxon>
        <taxon>Rickettsiales</taxon>
        <taxon>Anaplasmataceae</taxon>
        <taxon>Anaplasma</taxon>
    </lineage>
</organism>